<proteinExistence type="inferred from homology"/>
<comment type="function">
    <text evidence="1">Involved in the regulation of the intracellular balance of NAD and NADP, and is a key enzyme in the biosynthesis of NADP. Catalyzes specifically the phosphorylation on 2'-hydroxyl of the adenosine moiety of NAD to yield NADP.</text>
</comment>
<comment type="catalytic activity">
    <reaction evidence="1">
        <text>NAD(+) + ATP = ADP + NADP(+) + H(+)</text>
        <dbReference type="Rhea" id="RHEA:18629"/>
        <dbReference type="ChEBI" id="CHEBI:15378"/>
        <dbReference type="ChEBI" id="CHEBI:30616"/>
        <dbReference type="ChEBI" id="CHEBI:57540"/>
        <dbReference type="ChEBI" id="CHEBI:58349"/>
        <dbReference type="ChEBI" id="CHEBI:456216"/>
        <dbReference type="EC" id="2.7.1.23"/>
    </reaction>
</comment>
<comment type="cofactor">
    <cofactor evidence="1">
        <name>a divalent metal cation</name>
        <dbReference type="ChEBI" id="CHEBI:60240"/>
    </cofactor>
</comment>
<comment type="subcellular location">
    <subcellularLocation>
        <location evidence="1">Cytoplasm</location>
    </subcellularLocation>
</comment>
<comment type="similarity">
    <text evidence="1">Belongs to the NAD kinase family.</text>
</comment>
<evidence type="ECO:0000255" key="1">
    <source>
        <dbReference type="HAMAP-Rule" id="MF_00361"/>
    </source>
</evidence>
<sequence length="296" mass="32853">MNSPFHNIGIVTRPNTPDIQDTAHTLITFLKQHGFTVYLDEVGIKEGCIYTQDTVGCHIVNKTELGQYCDLVAVLGGDGTFLSVAREIALRAVPIIGINQGHLGFLTQIPREYMTDKLLPVLEGKYLAEERILIEAALIREGKTAERAIALNDAVLSRGGAGQMIEFEVFVNREFVYTQRSDGLIVSTPTGSTAYSLAAGGPIMQAGLHAFTLVPICPQSMTNRPIAIPDTSEIEILVTQGGDARVHFDGQTHIDVQNLDRITIRRYRNPLRILHPTDYQYFKTLRQKLHWGEQLV</sequence>
<keyword id="KW-0067">ATP-binding</keyword>
<keyword id="KW-0963">Cytoplasm</keyword>
<keyword id="KW-0418">Kinase</keyword>
<keyword id="KW-0520">NAD</keyword>
<keyword id="KW-0521">NADP</keyword>
<keyword id="KW-0547">Nucleotide-binding</keyword>
<keyword id="KW-0808">Transferase</keyword>
<protein>
    <recommendedName>
        <fullName evidence="1">NAD kinase</fullName>
        <ecNumber evidence="1">2.7.1.23</ecNumber>
    </recommendedName>
    <alternativeName>
        <fullName evidence="1">ATP-dependent NAD kinase</fullName>
    </alternativeName>
</protein>
<name>NADK_NEIM0</name>
<organism>
    <name type="scientific">Neisseria meningitidis serogroup C (strain 053442)</name>
    <dbReference type="NCBI Taxonomy" id="374833"/>
    <lineage>
        <taxon>Bacteria</taxon>
        <taxon>Pseudomonadati</taxon>
        <taxon>Pseudomonadota</taxon>
        <taxon>Betaproteobacteria</taxon>
        <taxon>Neisseriales</taxon>
        <taxon>Neisseriaceae</taxon>
        <taxon>Neisseria</taxon>
    </lineage>
</organism>
<accession>A9M3N9</accession>
<dbReference type="EC" id="2.7.1.23" evidence="1"/>
<dbReference type="EMBL" id="CP000381">
    <property type="protein sequence ID" value="ABX72964.1"/>
    <property type="molecule type" value="Genomic_DNA"/>
</dbReference>
<dbReference type="RefSeq" id="WP_002213954.1">
    <property type="nucleotide sequence ID" value="NC_010120.1"/>
</dbReference>
<dbReference type="SMR" id="A9M3N9"/>
<dbReference type="KEGG" id="nmn:NMCC_0771"/>
<dbReference type="HOGENOM" id="CLU_008831_0_1_4"/>
<dbReference type="Proteomes" id="UP000001177">
    <property type="component" value="Chromosome"/>
</dbReference>
<dbReference type="GO" id="GO:0005737">
    <property type="term" value="C:cytoplasm"/>
    <property type="evidence" value="ECO:0007669"/>
    <property type="project" value="UniProtKB-SubCell"/>
</dbReference>
<dbReference type="GO" id="GO:0005524">
    <property type="term" value="F:ATP binding"/>
    <property type="evidence" value="ECO:0007669"/>
    <property type="project" value="UniProtKB-KW"/>
</dbReference>
<dbReference type="GO" id="GO:0046872">
    <property type="term" value="F:metal ion binding"/>
    <property type="evidence" value="ECO:0007669"/>
    <property type="project" value="UniProtKB-UniRule"/>
</dbReference>
<dbReference type="GO" id="GO:0051287">
    <property type="term" value="F:NAD binding"/>
    <property type="evidence" value="ECO:0007669"/>
    <property type="project" value="UniProtKB-ARBA"/>
</dbReference>
<dbReference type="GO" id="GO:0003951">
    <property type="term" value="F:NAD+ kinase activity"/>
    <property type="evidence" value="ECO:0007669"/>
    <property type="project" value="UniProtKB-UniRule"/>
</dbReference>
<dbReference type="GO" id="GO:0019674">
    <property type="term" value="P:NAD metabolic process"/>
    <property type="evidence" value="ECO:0007669"/>
    <property type="project" value="InterPro"/>
</dbReference>
<dbReference type="GO" id="GO:0006741">
    <property type="term" value="P:NADP biosynthetic process"/>
    <property type="evidence" value="ECO:0007669"/>
    <property type="project" value="UniProtKB-UniRule"/>
</dbReference>
<dbReference type="FunFam" id="2.60.200.30:FF:000011">
    <property type="entry name" value="NAD kinase"/>
    <property type="match status" value="1"/>
</dbReference>
<dbReference type="Gene3D" id="3.40.50.10330">
    <property type="entry name" value="Probable inorganic polyphosphate/atp-NAD kinase, domain 1"/>
    <property type="match status" value="1"/>
</dbReference>
<dbReference type="Gene3D" id="2.60.200.30">
    <property type="entry name" value="Probable inorganic polyphosphate/atp-NAD kinase, domain 2"/>
    <property type="match status" value="1"/>
</dbReference>
<dbReference type="HAMAP" id="MF_00361">
    <property type="entry name" value="NAD_kinase"/>
    <property type="match status" value="1"/>
</dbReference>
<dbReference type="InterPro" id="IPR017438">
    <property type="entry name" value="ATP-NAD_kinase_N"/>
</dbReference>
<dbReference type="InterPro" id="IPR017437">
    <property type="entry name" value="ATP-NAD_kinase_PpnK-typ_C"/>
</dbReference>
<dbReference type="InterPro" id="IPR016064">
    <property type="entry name" value="NAD/diacylglycerol_kinase_sf"/>
</dbReference>
<dbReference type="InterPro" id="IPR002504">
    <property type="entry name" value="NADK"/>
</dbReference>
<dbReference type="NCBIfam" id="NF002306">
    <property type="entry name" value="PRK01231.1"/>
    <property type="match status" value="1"/>
</dbReference>
<dbReference type="NCBIfam" id="NF003391">
    <property type="entry name" value="PRK04539.1"/>
    <property type="match status" value="1"/>
</dbReference>
<dbReference type="PANTHER" id="PTHR20275">
    <property type="entry name" value="NAD KINASE"/>
    <property type="match status" value="1"/>
</dbReference>
<dbReference type="PANTHER" id="PTHR20275:SF0">
    <property type="entry name" value="NAD KINASE"/>
    <property type="match status" value="1"/>
</dbReference>
<dbReference type="Pfam" id="PF01513">
    <property type="entry name" value="NAD_kinase"/>
    <property type="match status" value="1"/>
</dbReference>
<dbReference type="Pfam" id="PF20143">
    <property type="entry name" value="NAD_kinase_C"/>
    <property type="match status" value="1"/>
</dbReference>
<dbReference type="SUPFAM" id="SSF111331">
    <property type="entry name" value="NAD kinase/diacylglycerol kinase-like"/>
    <property type="match status" value="1"/>
</dbReference>
<gene>
    <name evidence="1" type="primary">nadK</name>
    <name type="ordered locus">NMCC_0771</name>
</gene>
<reference key="1">
    <citation type="journal article" date="2008" name="Genomics">
        <title>Characterization of ST-4821 complex, a unique Neisseria meningitidis clone.</title>
        <authorList>
            <person name="Peng J."/>
            <person name="Yang L."/>
            <person name="Yang F."/>
            <person name="Yang J."/>
            <person name="Yan Y."/>
            <person name="Nie H."/>
            <person name="Zhang X."/>
            <person name="Xiong Z."/>
            <person name="Jiang Y."/>
            <person name="Cheng F."/>
            <person name="Xu X."/>
            <person name="Chen S."/>
            <person name="Sun L."/>
            <person name="Li W."/>
            <person name="Shen Y."/>
            <person name="Shao Z."/>
            <person name="Liang X."/>
            <person name="Xu J."/>
            <person name="Jin Q."/>
        </authorList>
    </citation>
    <scope>NUCLEOTIDE SEQUENCE [LARGE SCALE GENOMIC DNA]</scope>
    <source>
        <strain>053442</strain>
    </source>
</reference>
<feature type="chain" id="PRO_1000079502" description="NAD kinase">
    <location>
        <begin position="1"/>
        <end position="296"/>
    </location>
</feature>
<feature type="active site" description="Proton acceptor" evidence="1">
    <location>
        <position position="78"/>
    </location>
</feature>
<feature type="binding site" evidence="1">
    <location>
        <begin position="78"/>
        <end position="79"/>
    </location>
    <ligand>
        <name>NAD(+)</name>
        <dbReference type="ChEBI" id="CHEBI:57540"/>
    </ligand>
</feature>
<feature type="binding site" evidence="1">
    <location>
        <begin position="152"/>
        <end position="153"/>
    </location>
    <ligand>
        <name>NAD(+)</name>
        <dbReference type="ChEBI" id="CHEBI:57540"/>
    </ligand>
</feature>
<feature type="binding site" evidence="1">
    <location>
        <position position="180"/>
    </location>
    <ligand>
        <name>NAD(+)</name>
        <dbReference type="ChEBI" id="CHEBI:57540"/>
    </ligand>
</feature>
<feature type="binding site" evidence="1">
    <location>
        <position position="182"/>
    </location>
    <ligand>
        <name>NAD(+)</name>
        <dbReference type="ChEBI" id="CHEBI:57540"/>
    </ligand>
</feature>
<feature type="binding site" evidence="1">
    <location>
        <position position="251"/>
    </location>
    <ligand>
        <name>NAD(+)</name>
        <dbReference type="ChEBI" id="CHEBI:57540"/>
    </ligand>
</feature>